<evidence type="ECO:0000255" key="1">
    <source>
        <dbReference type="HAMAP-Rule" id="MF_01025"/>
    </source>
</evidence>
<feature type="chain" id="PRO_1000149236" description="2-isopropylmalate synthase">
    <location>
        <begin position="1"/>
        <end position="512"/>
    </location>
</feature>
<feature type="domain" description="Pyruvate carboxyltransferase" evidence="1">
    <location>
        <begin position="5"/>
        <end position="268"/>
    </location>
</feature>
<feature type="region of interest" description="Regulatory domain" evidence="1">
    <location>
        <begin position="394"/>
        <end position="512"/>
    </location>
</feature>
<feature type="binding site" evidence="1">
    <location>
        <position position="14"/>
    </location>
    <ligand>
        <name>Mn(2+)</name>
        <dbReference type="ChEBI" id="CHEBI:29035"/>
    </ligand>
</feature>
<feature type="binding site" evidence="1">
    <location>
        <position position="202"/>
    </location>
    <ligand>
        <name>Mn(2+)</name>
        <dbReference type="ChEBI" id="CHEBI:29035"/>
    </ligand>
</feature>
<feature type="binding site" evidence="1">
    <location>
        <position position="204"/>
    </location>
    <ligand>
        <name>Mn(2+)</name>
        <dbReference type="ChEBI" id="CHEBI:29035"/>
    </ligand>
</feature>
<feature type="binding site" evidence="1">
    <location>
        <position position="239"/>
    </location>
    <ligand>
        <name>Mn(2+)</name>
        <dbReference type="ChEBI" id="CHEBI:29035"/>
    </ligand>
</feature>
<name>LEU1_POLNA</name>
<proteinExistence type="inferred from homology"/>
<accession>A1VN06</accession>
<reference key="1">
    <citation type="journal article" date="2009" name="Environ. Microbiol.">
        <title>The genome of Polaromonas naphthalenivorans strain CJ2, isolated from coal tar-contaminated sediment, reveals physiological and metabolic versatility and evolution through extensive horizontal gene transfer.</title>
        <authorList>
            <person name="Yagi J.M."/>
            <person name="Sims D."/>
            <person name="Brettin T."/>
            <person name="Bruce D."/>
            <person name="Madsen E.L."/>
        </authorList>
    </citation>
    <scope>NUCLEOTIDE SEQUENCE [LARGE SCALE GENOMIC DNA]</scope>
    <source>
        <strain>CJ2</strain>
    </source>
</reference>
<sequence>MTDKLIIFDTTLRDGEQSPGASMTRDEKLRIARQLERLKVDVIEAGFAASSNGDFECVKAIAEVVKDSTICSLARANDRDISRAAEALKPANSGRLHLFLATSALHMEKKLRMTPDQVFEQARLSVRFARNLMADIEFSPEDGYRSDPDFLCRVIEAVINEGATTINVPDTVGYAIPELYGNFIRNLRERIPNSDKAVWSVHCHNDLGMAVANSLAGVKIGGARQVECTINGLGERAGNCSLEEVVMAVKTRKDYFGLDIGIDTQQILAASRLVSQTTGFVVQPNKAVVGANAFAHASGIHQDGVLKARDTYEIMRAEDVGWSANKIVLGKLSGRNAFKQRLQELGVAMESETDINNAFIKFKDLADRKSEIFDEDILALVSDESVTHSNEQYGFVSLSQHSETGERPQACVIFTVAGKEVKGESDGNGPVDASLKAIETHVKSGAEMVLYSVNAISGSTESQGEVTVRLQNSGRVVNGVGSDPDIVVASAKAYLSALNKLQSKADRVAAQG</sequence>
<comment type="function">
    <text evidence="1">Catalyzes the condensation of the acetyl group of acetyl-CoA with 3-methyl-2-oxobutanoate (2-ketoisovalerate) to form 3-carboxy-3-hydroxy-4-methylpentanoate (2-isopropylmalate).</text>
</comment>
<comment type="catalytic activity">
    <reaction evidence="1">
        <text>3-methyl-2-oxobutanoate + acetyl-CoA + H2O = (2S)-2-isopropylmalate + CoA + H(+)</text>
        <dbReference type="Rhea" id="RHEA:21524"/>
        <dbReference type="ChEBI" id="CHEBI:1178"/>
        <dbReference type="ChEBI" id="CHEBI:11851"/>
        <dbReference type="ChEBI" id="CHEBI:15377"/>
        <dbReference type="ChEBI" id="CHEBI:15378"/>
        <dbReference type="ChEBI" id="CHEBI:57287"/>
        <dbReference type="ChEBI" id="CHEBI:57288"/>
        <dbReference type="EC" id="2.3.3.13"/>
    </reaction>
</comment>
<comment type="cofactor">
    <cofactor evidence="1">
        <name>Mn(2+)</name>
        <dbReference type="ChEBI" id="CHEBI:29035"/>
    </cofactor>
</comment>
<comment type="pathway">
    <text evidence="1">Amino-acid biosynthesis; L-leucine biosynthesis; L-leucine from 3-methyl-2-oxobutanoate: step 1/4.</text>
</comment>
<comment type="subunit">
    <text evidence="1">Homodimer.</text>
</comment>
<comment type="subcellular location">
    <subcellularLocation>
        <location evidence="1">Cytoplasm</location>
    </subcellularLocation>
</comment>
<comment type="similarity">
    <text evidence="1">Belongs to the alpha-IPM synthase/homocitrate synthase family. LeuA type 1 subfamily.</text>
</comment>
<dbReference type="EC" id="2.3.3.13" evidence="1"/>
<dbReference type="EMBL" id="CP000529">
    <property type="protein sequence ID" value="ABM37034.1"/>
    <property type="molecule type" value="Genomic_DNA"/>
</dbReference>
<dbReference type="RefSeq" id="WP_011801120.1">
    <property type="nucleotide sequence ID" value="NC_008781.1"/>
</dbReference>
<dbReference type="SMR" id="A1VN06"/>
<dbReference type="STRING" id="365044.Pnap_1721"/>
<dbReference type="KEGG" id="pna:Pnap_1721"/>
<dbReference type="eggNOG" id="COG0119">
    <property type="taxonomic scope" value="Bacteria"/>
</dbReference>
<dbReference type="HOGENOM" id="CLU_022158_0_1_4"/>
<dbReference type="OrthoDB" id="9803573at2"/>
<dbReference type="UniPathway" id="UPA00048">
    <property type="reaction ID" value="UER00070"/>
</dbReference>
<dbReference type="Proteomes" id="UP000000644">
    <property type="component" value="Chromosome"/>
</dbReference>
<dbReference type="GO" id="GO:0005829">
    <property type="term" value="C:cytosol"/>
    <property type="evidence" value="ECO:0007669"/>
    <property type="project" value="TreeGrafter"/>
</dbReference>
<dbReference type="GO" id="GO:0003852">
    <property type="term" value="F:2-isopropylmalate synthase activity"/>
    <property type="evidence" value="ECO:0007669"/>
    <property type="project" value="UniProtKB-UniRule"/>
</dbReference>
<dbReference type="GO" id="GO:0003985">
    <property type="term" value="F:acetyl-CoA C-acetyltransferase activity"/>
    <property type="evidence" value="ECO:0007669"/>
    <property type="project" value="UniProtKB-UniRule"/>
</dbReference>
<dbReference type="GO" id="GO:0030145">
    <property type="term" value="F:manganese ion binding"/>
    <property type="evidence" value="ECO:0007669"/>
    <property type="project" value="UniProtKB-UniRule"/>
</dbReference>
<dbReference type="GO" id="GO:0009098">
    <property type="term" value="P:L-leucine biosynthetic process"/>
    <property type="evidence" value="ECO:0007669"/>
    <property type="project" value="UniProtKB-UniRule"/>
</dbReference>
<dbReference type="CDD" id="cd07940">
    <property type="entry name" value="DRE_TIM_IPMS"/>
    <property type="match status" value="1"/>
</dbReference>
<dbReference type="FunFam" id="1.10.238.260:FF:000001">
    <property type="entry name" value="2-isopropylmalate synthase"/>
    <property type="match status" value="1"/>
</dbReference>
<dbReference type="FunFam" id="3.20.20.70:FF:000010">
    <property type="entry name" value="2-isopropylmalate synthase"/>
    <property type="match status" value="1"/>
</dbReference>
<dbReference type="Gene3D" id="1.10.238.260">
    <property type="match status" value="1"/>
</dbReference>
<dbReference type="Gene3D" id="3.30.160.270">
    <property type="match status" value="1"/>
</dbReference>
<dbReference type="Gene3D" id="3.20.20.70">
    <property type="entry name" value="Aldolase class I"/>
    <property type="match status" value="1"/>
</dbReference>
<dbReference type="HAMAP" id="MF_01025">
    <property type="entry name" value="LeuA_type1"/>
    <property type="match status" value="1"/>
</dbReference>
<dbReference type="InterPro" id="IPR050073">
    <property type="entry name" value="2-IPM_HCS-like"/>
</dbReference>
<dbReference type="InterPro" id="IPR013709">
    <property type="entry name" value="2-isopropylmalate_synth_dimer"/>
</dbReference>
<dbReference type="InterPro" id="IPR002034">
    <property type="entry name" value="AIPM/Hcit_synth_CS"/>
</dbReference>
<dbReference type="InterPro" id="IPR013785">
    <property type="entry name" value="Aldolase_TIM"/>
</dbReference>
<dbReference type="InterPro" id="IPR054691">
    <property type="entry name" value="LeuA/HCS_post-cat"/>
</dbReference>
<dbReference type="InterPro" id="IPR036230">
    <property type="entry name" value="LeuA_allosteric_dom_sf"/>
</dbReference>
<dbReference type="InterPro" id="IPR005671">
    <property type="entry name" value="LeuA_bact_synth"/>
</dbReference>
<dbReference type="InterPro" id="IPR000891">
    <property type="entry name" value="PYR_CT"/>
</dbReference>
<dbReference type="NCBIfam" id="TIGR00973">
    <property type="entry name" value="leuA_bact"/>
    <property type="match status" value="1"/>
</dbReference>
<dbReference type="NCBIfam" id="NF002086">
    <property type="entry name" value="PRK00915.1-3"/>
    <property type="match status" value="1"/>
</dbReference>
<dbReference type="NCBIfam" id="NF002087">
    <property type="entry name" value="PRK00915.1-4"/>
    <property type="match status" value="1"/>
</dbReference>
<dbReference type="PANTHER" id="PTHR10277:SF9">
    <property type="entry name" value="2-ISOPROPYLMALATE SYNTHASE 1, CHLOROPLASTIC-RELATED"/>
    <property type="match status" value="1"/>
</dbReference>
<dbReference type="PANTHER" id="PTHR10277">
    <property type="entry name" value="HOMOCITRATE SYNTHASE-RELATED"/>
    <property type="match status" value="1"/>
</dbReference>
<dbReference type="Pfam" id="PF22617">
    <property type="entry name" value="HCS_D2"/>
    <property type="match status" value="1"/>
</dbReference>
<dbReference type="Pfam" id="PF00682">
    <property type="entry name" value="HMGL-like"/>
    <property type="match status" value="1"/>
</dbReference>
<dbReference type="Pfam" id="PF08502">
    <property type="entry name" value="LeuA_dimer"/>
    <property type="match status" value="1"/>
</dbReference>
<dbReference type="SMART" id="SM00917">
    <property type="entry name" value="LeuA_dimer"/>
    <property type="match status" value="1"/>
</dbReference>
<dbReference type="SUPFAM" id="SSF110921">
    <property type="entry name" value="2-isopropylmalate synthase LeuA, allosteric (dimerisation) domain"/>
    <property type="match status" value="1"/>
</dbReference>
<dbReference type="SUPFAM" id="SSF51569">
    <property type="entry name" value="Aldolase"/>
    <property type="match status" value="1"/>
</dbReference>
<dbReference type="PROSITE" id="PS00815">
    <property type="entry name" value="AIPM_HOMOCIT_SYNTH_1"/>
    <property type="match status" value="1"/>
</dbReference>
<dbReference type="PROSITE" id="PS00816">
    <property type="entry name" value="AIPM_HOMOCIT_SYNTH_2"/>
    <property type="match status" value="1"/>
</dbReference>
<dbReference type="PROSITE" id="PS50991">
    <property type="entry name" value="PYR_CT"/>
    <property type="match status" value="1"/>
</dbReference>
<gene>
    <name evidence="1" type="primary">leuA</name>
    <name type="ordered locus">Pnap_1721</name>
</gene>
<keyword id="KW-0028">Amino-acid biosynthesis</keyword>
<keyword id="KW-0100">Branched-chain amino acid biosynthesis</keyword>
<keyword id="KW-0963">Cytoplasm</keyword>
<keyword id="KW-0432">Leucine biosynthesis</keyword>
<keyword id="KW-0464">Manganese</keyword>
<keyword id="KW-0479">Metal-binding</keyword>
<keyword id="KW-1185">Reference proteome</keyword>
<keyword id="KW-0808">Transferase</keyword>
<protein>
    <recommendedName>
        <fullName evidence="1">2-isopropylmalate synthase</fullName>
        <ecNumber evidence="1">2.3.3.13</ecNumber>
    </recommendedName>
    <alternativeName>
        <fullName evidence="1">Alpha-IPM synthase</fullName>
    </alternativeName>
    <alternativeName>
        <fullName evidence="1">Alpha-isopropylmalate synthase</fullName>
    </alternativeName>
</protein>
<organism>
    <name type="scientific">Polaromonas naphthalenivorans (strain CJ2)</name>
    <dbReference type="NCBI Taxonomy" id="365044"/>
    <lineage>
        <taxon>Bacteria</taxon>
        <taxon>Pseudomonadati</taxon>
        <taxon>Pseudomonadota</taxon>
        <taxon>Betaproteobacteria</taxon>
        <taxon>Burkholderiales</taxon>
        <taxon>Comamonadaceae</taxon>
        <taxon>Polaromonas</taxon>
    </lineage>
</organism>